<proteinExistence type="inferred from homology"/>
<gene>
    <name type="ORF">RCOM_0530710</name>
</gene>
<keyword id="KW-0328">Glycosyltransferase</keyword>
<keyword id="KW-0472">Membrane</keyword>
<keyword id="KW-1185">Reference proteome</keyword>
<keyword id="KW-0735">Signal-anchor</keyword>
<keyword id="KW-0808">Transferase</keyword>
<keyword id="KW-0812">Transmembrane</keyword>
<keyword id="KW-1133">Transmembrane helix</keyword>
<sequence>MKDRRRRETVSWNRFFWCTLLLVLSCVLFTASTFREKFQPEIVSAWRQPAMEATTTIMSTNSPAKPSISIRETVMLPDQVLIFVNYPQSSRLFTKEDFSCVYFSRNSTSLSETQLKKPPNQIDGTDVNNQIVRCPLNPRGFSVSLELKSGGGYINPGPTHRWDSLVYEAMIDRDNTTVVFVKGFNLRADRIYNASKFECVYGWDFRKTKFVLRSNVISIAQEIVRCQTPLSILNNQLKVNNAIKVSIRLKGKGTLHSIARPGVQLLTDPEPGLRGEKPHEMCICTMLRNQGRFLKEWVMYHSQIGVERWFIYDNNSEDDIDSVIESLIDAKFNISRHVWPWVKAQEAGFAHCALRARGLCEWVGFIDVDEFFHLPTGLNLQDAVKNQSNSGNNVAELRVSCHSFGPSGLKHVPAQGVTVGYTCRMMLPERHKSIVKPEALNSTLINVVHHFHLRDGFRYVNADKGILVINHYKYQVWEVFKEKFYRRVATYVVDWQNEQNVGSKDRAPGLGTRAVEPPDWSSRFCEVSDTGLRDRILQNFLDPLTDLLPWQI</sequence>
<evidence type="ECO:0000255" key="1"/>
<evidence type="ECO:0000305" key="2"/>
<comment type="subcellular location">
    <subcellularLocation>
        <location evidence="2">Membrane</location>
        <topology evidence="2">Single-pass membrane protein</topology>
    </subcellularLocation>
</comment>
<comment type="similarity">
    <text evidence="2">Belongs to the glycosyltransferase 92 family.</text>
</comment>
<reference key="1">
    <citation type="journal article" date="2010" name="Nat. Biotechnol.">
        <title>Draft genome sequence of the oilseed species Ricinus communis.</title>
        <authorList>
            <person name="Chan A.P."/>
            <person name="Crabtree J."/>
            <person name="Zhao Q."/>
            <person name="Lorenzi H."/>
            <person name="Orvis J."/>
            <person name="Puiu D."/>
            <person name="Melake-Berhan A."/>
            <person name="Jones K.M."/>
            <person name="Redman J."/>
            <person name="Chen G."/>
            <person name="Cahoon E.B."/>
            <person name="Gedil M."/>
            <person name="Stanke M."/>
            <person name="Haas B.J."/>
            <person name="Wortman J.R."/>
            <person name="Fraser-Liggett C.M."/>
            <person name="Ravel J."/>
            <person name="Rabinowicz P.D."/>
        </authorList>
    </citation>
    <scope>NUCLEOTIDE SEQUENCE [LARGE SCALE GENOMIC DNA]</scope>
    <source>
        <strain>cv. Hale</strain>
    </source>
</reference>
<feature type="chain" id="PRO_0000405581" description="Glycosyltransferase family 92 protein RCOM_0530710">
    <location>
        <begin position="1"/>
        <end position="552"/>
    </location>
</feature>
<feature type="transmembrane region" description="Helical; Signal-anchor" evidence="1">
    <location>
        <begin position="12"/>
        <end position="34"/>
    </location>
</feature>
<feature type="domain" description="GT92">
    <location>
        <begin position="277"/>
        <end position="520"/>
    </location>
</feature>
<organism>
    <name type="scientific">Ricinus communis</name>
    <name type="common">Castor bean</name>
    <dbReference type="NCBI Taxonomy" id="3988"/>
    <lineage>
        <taxon>Eukaryota</taxon>
        <taxon>Viridiplantae</taxon>
        <taxon>Streptophyta</taxon>
        <taxon>Embryophyta</taxon>
        <taxon>Tracheophyta</taxon>
        <taxon>Spermatophyta</taxon>
        <taxon>Magnoliopsida</taxon>
        <taxon>eudicotyledons</taxon>
        <taxon>Gunneridae</taxon>
        <taxon>Pentapetalae</taxon>
        <taxon>rosids</taxon>
        <taxon>fabids</taxon>
        <taxon>Malpighiales</taxon>
        <taxon>Euphorbiaceae</taxon>
        <taxon>Acalyphoideae</taxon>
        <taxon>Acalypheae</taxon>
        <taxon>Ricinus</taxon>
    </lineage>
</organism>
<protein>
    <recommendedName>
        <fullName>Glycosyltransferase family 92 protein RCOM_0530710</fullName>
        <ecNumber evidence="2">2.4.1.-</ecNumber>
    </recommendedName>
</protein>
<dbReference type="EC" id="2.4.1.-" evidence="2"/>
<dbReference type="EMBL" id="EQ974021">
    <property type="protein sequence ID" value="EEF35417.1"/>
    <property type="molecule type" value="Genomic_DNA"/>
</dbReference>
<dbReference type="SMR" id="B9SLR1"/>
<dbReference type="FunCoup" id="B9SLR1">
    <property type="interactions" value="200"/>
</dbReference>
<dbReference type="STRING" id="3988.B9SLR1"/>
<dbReference type="eggNOG" id="KOG4159">
    <property type="taxonomic scope" value="Eukaryota"/>
</dbReference>
<dbReference type="InParanoid" id="B9SLR1"/>
<dbReference type="OMA" id="MYHTRIG"/>
<dbReference type="OrthoDB" id="2526284at2759"/>
<dbReference type="Proteomes" id="UP000008311">
    <property type="component" value="Unassembled WGS sequence"/>
</dbReference>
<dbReference type="GO" id="GO:0005737">
    <property type="term" value="C:cytoplasm"/>
    <property type="evidence" value="ECO:0000318"/>
    <property type="project" value="GO_Central"/>
</dbReference>
<dbReference type="GO" id="GO:0016020">
    <property type="term" value="C:membrane"/>
    <property type="evidence" value="ECO:0007669"/>
    <property type="project" value="UniProtKB-SubCell"/>
</dbReference>
<dbReference type="GO" id="GO:0016757">
    <property type="term" value="F:glycosyltransferase activity"/>
    <property type="evidence" value="ECO:0000318"/>
    <property type="project" value="GO_Central"/>
</dbReference>
<dbReference type="GO" id="GO:0070085">
    <property type="term" value="P:glycosylation"/>
    <property type="evidence" value="ECO:0000318"/>
    <property type="project" value="GO_Central"/>
</dbReference>
<dbReference type="InterPro" id="IPR008166">
    <property type="entry name" value="Glyco_transf_92"/>
</dbReference>
<dbReference type="PANTHER" id="PTHR21461">
    <property type="entry name" value="GLYCOSYLTRANSFERASE FAMILY 92 PROTEIN"/>
    <property type="match status" value="1"/>
</dbReference>
<dbReference type="PANTHER" id="PTHR21461:SF55">
    <property type="entry name" value="GLYCOSYLTRANSFERASE FAMILY 92 PROTEIN"/>
    <property type="match status" value="1"/>
</dbReference>
<dbReference type="Pfam" id="PF01697">
    <property type="entry name" value="Glyco_transf_92"/>
    <property type="match status" value="1"/>
</dbReference>
<name>Y231_RICCO</name>
<accession>B9SLR1</accession>